<organism>
    <name type="scientific">Candida albicans (strain SC5314 / ATCC MYA-2876)</name>
    <name type="common">Yeast</name>
    <dbReference type="NCBI Taxonomy" id="237561"/>
    <lineage>
        <taxon>Eukaryota</taxon>
        <taxon>Fungi</taxon>
        <taxon>Dikarya</taxon>
        <taxon>Ascomycota</taxon>
        <taxon>Saccharomycotina</taxon>
        <taxon>Pichiomycetes</taxon>
        <taxon>Debaryomycetaceae</taxon>
        <taxon>Candida/Lodderomyces clade</taxon>
        <taxon>Candida</taxon>
    </lineage>
</organism>
<feature type="chain" id="PRO_0000343042" description="Golgi apparatus membrane protein TVP23">
    <location>
        <begin position="1"/>
        <end position="267"/>
    </location>
</feature>
<feature type="transmembrane region" description="Helical" evidence="2">
    <location>
        <begin position="78"/>
        <end position="98"/>
    </location>
</feature>
<feature type="transmembrane region" description="Helical" evidence="2">
    <location>
        <begin position="105"/>
        <end position="125"/>
    </location>
</feature>
<feature type="transmembrane region" description="Helical" evidence="2">
    <location>
        <begin position="189"/>
        <end position="208"/>
    </location>
</feature>
<feature type="transmembrane region" description="Helical" evidence="2">
    <location>
        <begin position="212"/>
        <end position="234"/>
    </location>
</feature>
<feature type="region of interest" description="Disordered" evidence="3">
    <location>
        <begin position="1"/>
        <end position="59"/>
    </location>
</feature>
<feature type="compositionally biased region" description="Low complexity" evidence="3">
    <location>
        <begin position="26"/>
        <end position="38"/>
    </location>
</feature>
<feature type="compositionally biased region" description="Polar residues" evidence="3">
    <location>
        <begin position="39"/>
        <end position="59"/>
    </location>
</feature>
<feature type="glycosylation site" description="N-linked (GlcNAc...) asparagine" evidence="2">
    <location>
        <position position="2"/>
    </location>
</feature>
<feature type="glycosylation site" description="N-linked (GlcNAc...) asparagine" evidence="2">
    <location>
        <position position="26"/>
    </location>
</feature>
<feature type="glycosylation site" description="N-linked (GlcNAc...) asparagine" evidence="2">
    <location>
        <position position="30"/>
    </location>
</feature>
<feature type="glycosylation site" description="N-linked (GlcNAc...) asparagine" evidence="2">
    <location>
        <position position="127"/>
    </location>
</feature>
<feature type="glycosylation site" description="N-linked (GlcNAc...) asparagine" evidence="2">
    <location>
        <position position="140"/>
    </location>
</feature>
<feature type="glycosylation site" description="N-linked (GlcNAc...) asparagine" evidence="2">
    <location>
        <position position="155"/>
    </location>
</feature>
<keyword id="KW-0325">Glycoprotein</keyword>
<keyword id="KW-0333">Golgi apparatus</keyword>
<keyword id="KW-0472">Membrane</keyword>
<keyword id="KW-1185">Reference proteome</keyword>
<keyword id="KW-0812">Transmembrane</keyword>
<keyword id="KW-1133">Transmembrane helix</keyword>
<dbReference type="EMBL" id="CP017623">
    <property type="protein sequence ID" value="AOW26626.1"/>
    <property type="status" value="ALT_FRAME"/>
    <property type="molecule type" value="Genomic_DNA"/>
</dbReference>
<dbReference type="RefSeq" id="XP_723547.2">
    <property type="nucleotide sequence ID" value="XM_718454.2"/>
</dbReference>
<dbReference type="FunCoup" id="Q5APA2">
    <property type="interactions" value="411"/>
</dbReference>
<dbReference type="STRING" id="237561.Q5APA2"/>
<dbReference type="GlyCosmos" id="Q5APA2">
    <property type="glycosylation" value="6 sites, No reported glycans"/>
</dbReference>
<dbReference type="GeneID" id="3634861"/>
<dbReference type="KEGG" id="cal:CAALFM_C109950CA"/>
<dbReference type="HOGENOM" id="CLU_074845_0_0_1"/>
<dbReference type="InParanoid" id="Q5APA2"/>
<dbReference type="OrthoDB" id="2151161at2759"/>
<dbReference type="Proteomes" id="UP000000559">
    <property type="component" value="Chromosome 1"/>
</dbReference>
<dbReference type="GO" id="GO:0000139">
    <property type="term" value="C:Golgi membrane"/>
    <property type="evidence" value="ECO:0000318"/>
    <property type="project" value="GO_Central"/>
</dbReference>
<dbReference type="GO" id="GO:0009306">
    <property type="term" value="P:protein secretion"/>
    <property type="evidence" value="ECO:0000318"/>
    <property type="project" value="GO_Central"/>
</dbReference>
<dbReference type="GO" id="GO:0016192">
    <property type="term" value="P:vesicle-mediated transport"/>
    <property type="evidence" value="ECO:0000318"/>
    <property type="project" value="GO_Central"/>
</dbReference>
<dbReference type="InterPro" id="IPR008564">
    <property type="entry name" value="TVP23-like"/>
</dbReference>
<dbReference type="PANTHER" id="PTHR13019">
    <property type="entry name" value="GOLGI APPARATUS MEMBRANE PROTEIN TVP23"/>
    <property type="match status" value="1"/>
</dbReference>
<dbReference type="PANTHER" id="PTHR13019:SF7">
    <property type="entry name" value="GOLGI APPARATUS MEMBRANE PROTEIN TVP23"/>
    <property type="match status" value="1"/>
</dbReference>
<dbReference type="Pfam" id="PF05832">
    <property type="entry name" value="DUF846"/>
    <property type="match status" value="1"/>
</dbReference>
<sequence length="267" mass="29895">MNSSYTAIEPDEPLDSPPSYSANDHNTTTNTTTSNPSTQPYVNQPQADQPQQPGTSSSFEPRTLLQRLKESSHPIALLFYIFFRVSPIVTYIFGTIVIHQFTSKNTFILHFIVLILLVAGDFWNLKNISGRLLVGLRWWNETTLIESENGNGNGNASGQVGESAKDFENVWVFETADPNRYINPIDSKVFWLLLYGQPVAWVVLGVLAVLKLQFLYLLFIIVATSLSMTNAMAFTKCDKFGKANNFANDVFTRAAGSMFNNFNPFGR</sequence>
<accession>Q5APA2</accession>
<accession>A0A1D8PER9</accession>
<evidence type="ECO:0000250" key="1"/>
<evidence type="ECO:0000255" key="2"/>
<evidence type="ECO:0000256" key="3">
    <source>
        <dbReference type="SAM" id="MobiDB-lite"/>
    </source>
</evidence>
<evidence type="ECO:0000305" key="4"/>
<gene>
    <name type="primary">TVP23</name>
    <name type="ordered locus">CAALFM_C109950CA</name>
    <name type="ORF">CaO19.12326</name>
</gene>
<comment type="function">
    <text evidence="1">Golgi membrane protein involved in vesicular trafficking.</text>
</comment>
<comment type="subcellular location">
    <subcellularLocation>
        <location evidence="1">Golgi apparatus membrane</location>
        <topology evidence="1">Multi-pass membrane protein</topology>
    </subcellularLocation>
</comment>
<comment type="similarity">
    <text evidence="4">Belongs to the TVP23 family.</text>
</comment>
<comment type="sequence caution" evidence="4">
    <conflict type="frameshift">
        <sequence resource="EMBL-CDS" id="AOW26626"/>
    </conflict>
</comment>
<reference key="1">
    <citation type="journal article" date="2004" name="Proc. Natl. Acad. Sci. U.S.A.">
        <title>The diploid genome sequence of Candida albicans.</title>
        <authorList>
            <person name="Jones T."/>
            <person name="Federspiel N.A."/>
            <person name="Chibana H."/>
            <person name="Dungan J."/>
            <person name="Kalman S."/>
            <person name="Magee B.B."/>
            <person name="Newport G."/>
            <person name="Thorstenson Y.R."/>
            <person name="Agabian N."/>
            <person name="Magee P.T."/>
            <person name="Davis R.W."/>
            <person name="Scherer S."/>
        </authorList>
    </citation>
    <scope>NUCLEOTIDE SEQUENCE [LARGE SCALE GENOMIC DNA]</scope>
    <source>
        <strain>SC5314 / ATCC MYA-2876</strain>
    </source>
</reference>
<reference key="2">
    <citation type="journal article" date="2007" name="Genome Biol.">
        <title>Assembly of the Candida albicans genome into sixteen supercontigs aligned on the eight chromosomes.</title>
        <authorList>
            <person name="van het Hoog M."/>
            <person name="Rast T.J."/>
            <person name="Martchenko M."/>
            <person name="Grindle S."/>
            <person name="Dignard D."/>
            <person name="Hogues H."/>
            <person name="Cuomo C."/>
            <person name="Berriman M."/>
            <person name="Scherer S."/>
            <person name="Magee B.B."/>
            <person name="Whiteway M."/>
            <person name="Chibana H."/>
            <person name="Nantel A."/>
            <person name="Magee P.T."/>
        </authorList>
    </citation>
    <scope>GENOME REANNOTATION</scope>
    <source>
        <strain>SC5314 / ATCC MYA-2876</strain>
    </source>
</reference>
<reference key="3">
    <citation type="journal article" date="2013" name="Genome Biol.">
        <title>Assembly of a phased diploid Candida albicans genome facilitates allele-specific measurements and provides a simple model for repeat and indel structure.</title>
        <authorList>
            <person name="Muzzey D."/>
            <person name="Schwartz K."/>
            <person name="Weissman J.S."/>
            <person name="Sherlock G."/>
        </authorList>
    </citation>
    <scope>NUCLEOTIDE SEQUENCE [LARGE SCALE GENOMIC DNA]</scope>
    <scope>GENOME REANNOTATION</scope>
    <source>
        <strain>SC5314 / ATCC MYA-2876</strain>
    </source>
</reference>
<name>TVP23_CANAL</name>
<proteinExistence type="inferred from homology"/>
<protein>
    <recommendedName>
        <fullName>Golgi apparatus membrane protein TVP23</fullName>
    </recommendedName>
</protein>